<evidence type="ECO:0000250" key="1">
    <source>
        <dbReference type="UniProtKB" id="Q3UR97"/>
    </source>
</evidence>
<evidence type="ECO:0000250" key="2">
    <source>
        <dbReference type="UniProtKB" id="Q9D2Y5"/>
    </source>
</evidence>
<evidence type="ECO:0000255" key="3">
    <source>
        <dbReference type="PROSITE-ProRule" id="PRU00147"/>
    </source>
</evidence>
<evidence type="ECO:0000256" key="4">
    <source>
        <dbReference type="SAM" id="MobiDB-lite"/>
    </source>
</evidence>
<evidence type="ECO:0000269" key="5">
    <source>
    </source>
</evidence>
<evidence type="ECO:0000269" key="6">
    <source>
    </source>
</evidence>
<evidence type="ECO:0000303" key="7">
    <source>
    </source>
</evidence>
<evidence type="ECO:0000305" key="8"/>
<evidence type="ECO:0007829" key="9">
    <source>
        <dbReference type="PDB" id="2ETT"/>
    </source>
</evidence>
<accession>Q96L94</accession>
<accession>Q8WUS9</accession>
<accession>Q9H844</accession>
<dbReference type="EMBL" id="AY044653">
    <property type="protein sequence ID" value="AAK98767.1"/>
    <property type="molecule type" value="mRNA"/>
</dbReference>
<dbReference type="EMBL" id="AK024014">
    <property type="protein sequence ID" value="BAB14776.1"/>
    <property type="molecule type" value="mRNA"/>
</dbReference>
<dbReference type="EMBL" id="AC100840">
    <property type="status" value="NOT_ANNOTATED_CDS"/>
    <property type="molecule type" value="Genomic_DNA"/>
</dbReference>
<dbReference type="EMBL" id="BC019655">
    <property type="protein sequence ID" value="AAH19655.1"/>
    <property type="molecule type" value="mRNA"/>
</dbReference>
<dbReference type="CCDS" id="CCDS10190.1">
    <molecule id="Q96L94-1"/>
</dbReference>
<dbReference type="RefSeq" id="NP_079074.2">
    <molecule id="Q96L94-1"/>
    <property type="nucleotide sequence ID" value="NM_024798.3"/>
</dbReference>
<dbReference type="PDB" id="2ETT">
    <property type="method" value="NMR"/>
    <property type="chains" value="A=2-120"/>
</dbReference>
<dbReference type="PDBsum" id="2ETT"/>
<dbReference type="BMRB" id="Q96L94"/>
<dbReference type="SMR" id="Q96L94"/>
<dbReference type="BioGRID" id="122945">
    <property type="interactions" value="12"/>
</dbReference>
<dbReference type="FunCoup" id="Q96L94">
    <property type="interactions" value="37"/>
</dbReference>
<dbReference type="IntAct" id="Q96L94">
    <property type="interactions" value="9"/>
</dbReference>
<dbReference type="MINT" id="Q96L94"/>
<dbReference type="STRING" id="9606.ENSP00000323435"/>
<dbReference type="TCDB" id="3.A.34.1.1">
    <property type="family name" value="the sorting nexins of the escrt complexes (sn-escrt)"/>
</dbReference>
<dbReference type="iPTMnet" id="Q96L94"/>
<dbReference type="PhosphoSitePlus" id="Q96L94"/>
<dbReference type="BioMuta" id="SNX22"/>
<dbReference type="DMDM" id="20140142"/>
<dbReference type="jPOST" id="Q96L94"/>
<dbReference type="MassIVE" id="Q96L94"/>
<dbReference type="PaxDb" id="9606-ENSP00000323435"/>
<dbReference type="PeptideAtlas" id="Q96L94"/>
<dbReference type="ProteomicsDB" id="74706"/>
<dbReference type="ProteomicsDB" id="77170">
    <molecule id="Q96L94-1"/>
</dbReference>
<dbReference type="Antibodypedia" id="51656">
    <property type="antibodies" value="45 antibodies from 11 providers"/>
</dbReference>
<dbReference type="DNASU" id="79856"/>
<dbReference type="Ensembl" id="ENST00000325881.9">
    <molecule id="Q96L94-1"/>
    <property type="protein sequence ID" value="ENSP00000323435.4"/>
    <property type="gene ID" value="ENSG00000157734.14"/>
</dbReference>
<dbReference type="Ensembl" id="ENST00000558466.5">
    <molecule id="Q96L94-2"/>
    <property type="protein sequence ID" value="ENSP00000452692.1"/>
    <property type="gene ID" value="ENSG00000157734.14"/>
</dbReference>
<dbReference type="GeneID" id="79856"/>
<dbReference type="KEGG" id="hsa:79856"/>
<dbReference type="MANE-Select" id="ENST00000325881.9">
    <property type="protein sequence ID" value="ENSP00000323435.4"/>
    <property type="RefSeq nucleotide sequence ID" value="NM_024798.3"/>
    <property type="RefSeq protein sequence ID" value="NP_079074.2"/>
</dbReference>
<dbReference type="UCSC" id="uc002anc.1">
    <molecule id="Q96L94-1"/>
    <property type="organism name" value="human"/>
</dbReference>
<dbReference type="AGR" id="HGNC:16315"/>
<dbReference type="CTD" id="79856"/>
<dbReference type="DisGeNET" id="79856"/>
<dbReference type="GeneCards" id="SNX22"/>
<dbReference type="HGNC" id="HGNC:16315">
    <property type="gene designation" value="SNX22"/>
</dbReference>
<dbReference type="HPA" id="ENSG00000157734">
    <property type="expression patterns" value="Tissue enhanced (brain, thyroid gland)"/>
</dbReference>
<dbReference type="MalaCards" id="SNX22"/>
<dbReference type="neXtProt" id="NX_Q96L94"/>
<dbReference type="OpenTargets" id="ENSG00000157734"/>
<dbReference type="PharmGKB" id="PA134897329"/>
<dbReference type="VEuPathDB" id="HostDB:ENSG00000157734"/>
<dbReference type="eggNOG" id="KOG2101">
    <property type="taxonomic scope" value="Eukaryota"/>
</dbReference>
<dbReference type="GeneTree" id="ENSGT00390000001280"/>
<dbReference type="HOGENOM" id="CLU_117250_0_0_1"/>
<dbReference type="InParanoid" id="Q96L94"/>
<dbReference type="OMA" id="LTFHCDP"/>
<dbReference type="OrthoDB" id="93876at2759"/>
<dbReference type="PAN-GO" id="Q96L94">
    <property type="GO annotations" value="1 GO annotation based on evolutionary models"/>
</dbReference>
<dbReference type="PhylomeDB" id="Q96L94"/>
<dbReference type="TreeFam" id="TF332414"/>
<dbReference type="PathwayCommons" id="Q96L94"/>
<dbReference type="SignaLink" id="Q96L94"/>
<dbReference type="BioGRID-ORCS" id="79856">
    <property type="hits" value="35 hits in 1153 CRISPR screens"/>
</dbReference>
<dbReference type="ChiTaRS" id="SNX22">
    <property type="organism name" value="human"/>
</dbReference>
<dbReference type="EvolutionaryTrace" id="Q96L94"/>
<dbReference type="GenomeRNAi" id="79856"/>
<dbReference type="Pharos" id="Q96L94">
    <property type="development level" value="Tdark"/>
</dbReference>
<dbReference type="PRO" id="PR:Q96L94"/>
<dbReference type="Proteomes" id="UP000005640">
    <property type="component" value="Chromosome 15"/>
</dbReference>
<dbReference type="RNAct" id="Q96L94">
    <property type="molecule type" value="protein"/>
</dbReference>
<dbReference type="Bgee" id="ENSG00000157734">
    <property type="expression patterns" value="Expressed in right lobe of thyroid gland and 156 other cell types or tissues"/>
</dbReference>
<dbReference type="ExpressionAtlas" id="Q96L94">
    <property type="expression patterns" value="baseline and differential"/>
</dbReference>
<dbReference type="GO" id="GO:0030659">
    <property type="term" value="C:cytoplasmic vesicle membrane"/>
    <property type="evidence" value="ECO:0007669"/>
    <property type="project" value="UniProtKB-SubCell"/>
</dbReference>
<dbReference type="GO" id="GO:1901981">
    <property type="term" value="F:phosphatidylinositol phosphate binding"/>
    <property type="evidence" value="ECO:0000318"/>
    <property type="project" value="GO_Central"/>
</dbReference>
<dbReference type="GO" id="GO:0015031">
    <property type="term" value="P:protein transport"/>
    <property type="evidence" value="ECO:0007669"/>
    <property type="project" value="UniProtKB-KW"/>
</dbReference>
<dbReference type="CDD" id="cd06880">
    <property type="entry name" value="PX_SNX22"/>
    <property type="match status" value="1"/>
</dbReference>
<dbReference type="Gene3D" id="3.30.1520.10">
    <property type="entry name" value="Phox-like domain"/>
    <property type="match status" value="1"/>
</dbReference>
<dbReference type="InterPro" id="IPR001683">
    <property type="entry name" value="PX_dom"/>
</dbReference>
<dbReference type="InterPro" id="IPR036871">
    <property type="entry name" value="PX_dom_sf"/>
</dbReference>
<dbReference type="InterPro" id="IPR052467">
    <property type="entry name" value="Sorting_nexin_PX-domain"/>
</dbReference>
<dbReference type="PANTHER" id="PTHR15813:SF8">
    <property type="entry name" value="SORTING NEXIN-22"/>
    <property type="match status" value="1"/>
</dbReference>
<dbReference type="PANTHER" id="PTHR15813">
    <property type="entry name" value="SORTING NEXIN-22 AND 24"/>
    <property type="match status" value="1"/>
</dbReference>
<dbReference type="Pfam" id="PF00787">
    <property type="entry name" value="PX"/>
    <property type="match status" value="1"/>
</dbReference>
<dbReference type="SMART" id="SM00312">
    <property type="entry name" value="PX"/>
    <property type="match status" value="1"/>
</dbReference>
<dbReference type="SUPFAM" id="SSF64268">
    <property type="entry name" value="PX domain"/>
    <property type="match status" value="1"/>
</dbReference>
<dbReference type="PROSITE" id="PS50195">
    <property type="entry name" value="PX"/>
    <property type="match status" value="1"/>
</dbReference>
<comment type="function">
    <text evidence="2 5">May be involved in several stages of intracellular trafficking (By similarity). Interacts with membranes containing phosphatidylinositol 3-phosphate (PtdIns(3P)) (PubMed:17400918).</text>
</comment>
<comment type="subunit">
    <text evidence="6">(Microbial infection) Interacts with P.falciparum (strain 3D7) CK1.</text>
</comment>
<comment type="interaction">
    <interactant intactId="EBI-12310305">
        <id>Q96L94-2</id>
    </interactant>
    <interactant intactId="EBI-739789">
        <id>Q92997</id>
        <label>DVL3</label>
    </interactant>
    <organismsDiffer>false</organismsDiffer>
    <experiments>3</experiments>
</comment>
<comment type="subcellular location">
    <subcellularLocation>
        <location evidence="1">Cytoplasmic vesicle membrane</location>
        <topology evidence="1">Peripheral membrane protein</topology>
        <orientation evidence="1">Cytoplasmic side</orientation>
    </subcellularLocation>
</comment>
<comment type="alternative products">
    <event type="alternative splicing"/>
    <isoform>
        <id>Q96L94-1</id>
        <name>1</name>
        <sequence type="displayed"/>
    </isoform>
    <isoform>
        <id>Q96L94-2</id>
        <name>2</name>
        <sequence type="described" ref="VSP_056595"/>
    </isoform>
</comment>
<comment type="tissue specificity">
    <text evidence="6">Expressed in erythrocytes (at protein level).</text>
</comment>
<comment type="domain">
    <text evidence="5">The PX domain mediates specific binding to membranes enriched in phosphatidylinositol 3-phosphate (PtdIns(P3)).</text>
</comment>
<comment type="similarity">
    <text evidence="8">Belongs to the sorting nexin family.</text>
</comment>
<keyword id="KW-0002">3D-structure</keyword>
<keyword id="KW-0025">Alternative splicing</keyword>
<keyword id="KW-0968">Cytoplasmic vesicle</keyword>
<keyword id="KW-0446">Lipid-binding</keyword>
<keyword id="KW-0472">Membrane</keyword>
<keyword id="KW-0653">Protein transport</keyword>
<keyword id="KW-1267">Proteomics identification</keyword>
<keyword id="KW-1185">Reference proteome</keyword>
<keyword id="KW-0813">Transport</keyword>
<reference key="1">
    <citation type="submission" date="2001-07" db="EMBL/GenBank/DDBJ databases">
        <title>A novel member (SNX22) of the sorting nexin family.</title>
        <authorList>
            <person name="Hong W."/>
        </authorList>
    </citation>
    <scope>NUCLEOTIDE SEQUENCE [MRNA] (ISOFORM 1)</scope>
</reference>
<reference key="2">
    <citation type="journal article" date="2004" name="Nat. Genet.">
        <title>Complete sequencing and characterization of 21,243 full-length human cDNAs.</title>
        <authorList>
            <person name="Ota T."/>
            <person name="Suzuki Y."/>
            <person name="Nishikawa T."/>
            <person name="Otsuki T."/>
            <person name="Sugiyama T."/>
            <person name="Irie R."/>
            <person name="Wakamatsu A."/>
            <person name="Hayashi K."/>
            <person name="Sato H."/>
            <person name="Nagai K."/>
            <person name="Kimura K."/>
            <person name="Makita H."/>
            <person name="Sekine M."/>
            <person name="Obayashi M."/>
            <person name="Nishi T."/>
            <person name="Shibahara T."/>
            <person name="Tanaka T."/>
            <person name="Ishii S."/>
            <person name="Yamamoto J."/>
            <person name="Saito K."/>
            <person name="Kawai Y."/>
            <person name="Isono Y."/>
            <person name="Nakamura Y."/>
            <person name="Nagahari K."/>
            <person name="Murakami K."/>
            <person name="Yasuda T."/>
            <person name="Iwayanagi T."/>
            <person name="Wagatsuma M."/>
            <person name="Shiratori A."/>
            <person name="Sudo H."/>
            <person name="Hosoiri T."/>
            <person name="Kaku Y."/>
            <person name="Kodaira H."/>
            <person name="Kondo H."/>
            <person name="Sugawara M."/>
            <person name="Takahashi M."/>
            <person name="Kanda K."/>
            <person name="Yokoi T."/>
            <person name="Furuya T."/>
            <person name="Kikkawa E."/>
            <person name="Omura Y."/>
            <person name="Abe K."/>
            <person name="Kamihara K."/>
            <person name="Katsuta N."/>
            <person name="Sato K."/>
            <person name="Tanikawa M."/>
            <person name="Yamazaki M."/>
            <person name="Ninomiya K."/>
            <person name="Ishibashi T."/>
            <person name="Yamashita H."/>
            <person name="Murakawa K."/>
            <person name="Fujimori K."/>
            <person name="Tanai H."/>
            <person name="Kimata M."/>
            <person name="Watanabe M."/>
            <person name="Hiraoka S."/>
            <person name="Chiba Y."/>
            <person name="Ishida S."/>
            <person name="Ono Y."/>
            <person name="Takiguchi S."/>
            <person name="Watanabe S."/>
            <person name="Yosida M."/>
            <person name="Hotuta T."/>
            <person name="Kusano J."/>
            <person name="Kanehori K."/>
            <person name="Takahashi-Fujii A."/>
            <person name="Hara H."/>
            <person name="Tanase T.-O."/>
            <person name="Nomura Y."/>
            <person name="Togiya S."/>
            <person name="Komai F."/>
            <person name="Hara R."/>
            <person name="Takeuchi K."/>
            <person name="Arita M."/>
            <person name="Imose N."/>
            <person name="Musashino K."/>
            <person name="Yuuki H."/>
            <person name="Oshima A."/>
            <person name="Sasaki N."/>
            <person name="Aotsuka S."/>
            <person name="Yoshikawa Y."/>
            <person name="Matsunawa H."/>
            <person name="Ichihara T."/>
            <person name="Shiohata N."/>
            <person name="Sano S."/>
            <person name="Moriya S."/>
            <person name="Momiyama H."/>
            <person name="Satoh N."/>
            <person name="Takami S."/>
            <person name="Terashima Y."/>
            <person name="Suzuki O."/>
            <person name="Nakagawa S."/>
            <person name="Senoh A."/>
            <person name="Mizoguchi H."/>
            <person name="Goto Y."/>
            <person name="Shimizu F."/>
            <person name="Wakebe H."/>
            <person name="Hishigaki H."/>
            <person name="Watanabe T."/>
            <person name="Sugiyama A."/>
            <person name="Takemoto M."/>
            <person name="Kawakami B."/>
            <person name="Yamazaki M."/>
            <person name="Watanabe K."/>
            <person name="Kumagai A."/>
            <person name="Itakura S."/>
            <person name="Fukuzumi Y."/>
            <person name="Fujimori Y."/>
            <person name="Komiyama M."/>
            <person name="Tashiro H."/>
            <person name="Tanigami A."/>
            <person name="Fujiwara T."/>
            <person name="Ono T."/>
            <person name="Yamada K."/>
            <person name="Fujii Y."/>
            <person name="Ozaki K."/>
            <person name="Hirao M."/>
            <person name="Ohmori Y."/>
            <person name="Kawabata A."/>
            <person name="Hikiji T."/>
            <person name="Kobatake N."/>
            <person name="Inagaki H."/>
            <person name="Ikema Y."/>
            <person name="Okamoto S."/>
            <person name="Okitani R."/>
            <person name="Kawakami T."/>
            <person name="Noguchi S."/>
            <person name="Itoh T."/>
            <person name="Shigeta K."/>
            <person name="Senba T."/>
            <person name="Matsumura K."/>
            <person name="Nakajima Y."/>
            <person name="Mizuno T."/>
            <person name="Morinaga M."/>
            <person name="Sasaki M."/>
            <person name="Togashi T."/>
            <person name="Oyama M."/>
            <person name="Hata H."/>
            <person name="Watanabe M."/>
            <person name="Komatsu T."/>
            <person name="Mizushima-Sugano J."/>
            <person name="Satoh T."/>
            <person name="Shirai Y."/>
            <person name="Takahashi Y."/>
            <person name="Nakagawa K."/>
            <person name="Okumura K."/>
            <person name="Nagase T."/>
            <person name="Nomura N."/>
            <person name="Kikuchi H."/>
            <person name="Masuho Y."/>
            <person name="Yamashita R."/>
            <person name="Nakai K."/>
            <person name="Yada T."/>
            <person name="Nakamura Y."/>
            <person name="Ohara O."/>
            <person name="Isogai T."/>
            <person name="Sugano S."/>
        </authorList>
    </citation>
    <scope>NUCLEOTIDE SEQUENCE [LARGE SCALE MRNA] (ISOFORM 1)</scope>
</reference>
<reference key="3">
    <citation type="journal article" date="2006" name="Nature">
        <title>Analysis of the DNA sequence and duplication history of human chromosome 15.</title>
        <authorList>
            <person name="Zody M.C."/>
            <person name="Garber M."/>
            <person name="Sharpe T."/>
            <person name="Young S.K."/>
            <person name="Rowen L."/>
            <person name="O'Neill K."/>
            <person name="Whittaker C.A."/>
            <person name="Kamal M."/>
            <person name="Chang J.L."/>
            <person name="Cuomo C.A."/>
            <person name="Dewar K."/>
            <person name="FitzGerald M.G."/>
            <person name="Kodira C.D."/>
            <person name="Madan A."/>
            <person name="Qin S."/>
            <person name="Yang X."/>
            <person name="Abbasi N."/>
            <person name="Abouelleil A."/>
            <person name="Arachchi H.M."/>
            <person name="Baradarani L."/>
            <person name="Birditt B."/>
            <person name="Bloom S."/>
            <person name="Bloom T."/>
            <person name="Borowsky M.L."/>
            <person name="Burke J."/>
            <person name="Butler J."/>
            <person name="Cook A."/>
            <person name="DeArellano K."/>
            <person name="DeCaprio D."/>
            <person name="Dorris L. III"/>
            <person name="Dors M."/>
            <person name="Eichler E.E."/>
            <person name="Engels R."/>
            <person name="Fahey J."/>
            <person name="Fleetwood P."/>
            <person name="Friedman C."/>
            <person name="Gearin G."/>
            <person name="Hall J.L."/>
            <person name="Hensley G."/>
            <person name="Johnson E."/>
            <person name="Jones C."/>
            <person name="Kamat A."/>
            <person name="Kaur A."/>
            <person name="Locke D.P."/>
            <person name="Madan A."/>
            <person name="Munson G."/>
            <person name="Jaffe D.B."/>
            <person name="Lui A."/>
            <person name="Macdonald P."/>
            <person name="Mauceli E."/>
            <person name="Naylor J.W."/>
            <person name="Nesbitt R."/>
            <person name="Nicol R."/>
            <person name="O'Leary S.B."/>
            <person name="Ratcliffe A."/>
            <person name="Rounsley S."/>
            <person name="She X."/>
            <person name="Sneddon K.M.B."/>
            <person name="Stewart S."/>
            <person name="Sougnez C."/>
            <person name="Stone S.M."/>
            <person name="Topham K."/>
            <person name="Vincent D."/>
            <person name="Wang S."/>
            <person name="Zimmer A.R."/>
            <person name="Birren B.W."/>
            <person name="Hood L."/>
            <person name="Lander E.S."/>
            <person name="Nusbaum C."/>
        </authorList>
    </citation>
    <scope>NUCLEOTIDE SEQUENCE [LARGE SCALE GENOMIC DNA]</scope>
</reference>
<reference key="4">
    <citation type="journal article" date="2004" name="Genome Res.">
        <title>The status, quality, and expansion of the NIH full-length cDNA project: the Mammalian Gene Collection (MGC).</title>
        <authorList>
            <consortium name="The MGC Project Team"/>
        </authorList>
    </citation>
    <scope>NUCLEOTIDE SEQUENCE [LARGE SCALE MRNA] (ISOFORM 2)</scope>
    <source>
        <tissue>Brain</tissue>
    </source>
</reference>
<reference key="5">
    <citation type="journal article" date="2020" name="IUBMB Life">
        <title>Interaction of Plasmodium falciparum casein kinase 1 with components of host cell protein trafficking machinery.</title>
        <authorList>
            <person name="Batty M.B."/>
            <person name="Schittenhelm R.B."/>
            <person name="Dorin-Semblat D."/>
            <person name="Doerig C."/>
            <person name="Garcia-Bustos J.F."/>
        </authorList>
    </citation>
    <scope>INTERACTION WITH P.FALCIPARUM CK1 (MICROBIAL INFECTION)</scope>
    <scope>TISSUE SPECIFICITY</scope>
    <scope>IDENTIFICATION BY MASS SPECTROMETRY</scope>
</reference>
<reference key="6">
    <citation type="journal article" date="2007" name="Protein Sci.">
        <title>Solution structure of human sorting nexin 22.</title>
        <authorList>
            <person name="Song J."/>
            <person name="Zhao K.Q."/>
            <person name="Newman C.L."/>
            <person name="Vinarov D.A."/>
            <person name="Markley J.L."/>
        </authorList>
    </citation>
    <scope>STRUCTURE BY NMR OF 2-120</scope>
    <scope>DOMAIN</scope>
    <scope>SUBCELLULAR LOCATION</scope>
    <scope>PHOSPHATIDYLINOSITOL 3-PHOSPHATE BINDING</scope>
    <scope>FUNCTION</scope>
</reference>
<organism>
    <name type="scientific">Homo sapiens</name>
    <name type="common">Human</name>
    <dbReference type="NCBI Taxonomy" id="9606"/>
    <lineage>
        <taxon>Eukaryota</taxon>
        <taxon>Metazoa</taxon>
        <taxon>Chordata</taxon>
        <taxon>Craniata</taxon>
        <taxon>Vertebrata</taxon>
        <taxon>Euteleostomi</taxon>
        <taxon>Mammalia</taxon>
        <taxon>Eutheria</taxon>
        <taxon>Euarchontoglires</taxon>
        <taxon>Primates</taxon>
        <taxon>Haplorrhini</taxon>
        <taxon>Catarrhini</taxon>
        <taxon>Hominidae</taxon>
        <taxon>Homo</taxon>
    </lineage>
</organism>
<feature type="chain" id="PRO_0000213871" description="Sorting nexin-22">
    <location>
        <begin position="1"/>
        <end position="193"/>
    </location>
</feature>
<feature type="domain" description="PX" evidence="3">
    <location>
        <begin position="1"/>
        <end position="118"/>
    </location>
</feature>
<feature type="region of interest" description="Disordered" evidence="4">
    <location>
        <begin position="1"/>
        <end position="21"/>
    </location>
</feature>
<feature type="binding site" evidence="5">
    <location>
        <position position="43"/>
    </location>
    <ligand>
        <name>a 1,2-diacyl-sn-glycero-3-phospho-(1D-myo-inositol-3-phosphate)</name>
        <dbReference type="ChEBI" id="CHEBI:58088"/>
    </ligand>
</feature>
<feature type="binding site" evidence="5">
    <location>
        <position position="45"/>
    </location>
    <ligand>
        <name>a 1,2-diacyl-sn-glycero-3-phospho-(1D-myo-inositol-3-phosphate)</name>
        <dbReference type="ChEBI" id="CHEBI:58088"/>
    </ligand>
</feature>
<feature type="binding site" evidence="5">
    <location>
        <position position="66"/>
    </location>
    <ligand>
        <name>a 1,2-diacyl-sn-glycero-3-phospho-(1D-myo-inositol-3-phosphate)</name>
        <dbReference type="ChEBI" id="CHEBI:58088"/>
    </ligand>
</feature>
<feature type="binding site" evidence="5">
    <location>
        <position position="79"/>
    </location>
    <ligand>
        <name>a 1,2-diacyl-sn-glycero-3-phospho-(1D-myo-inositol-3-phosphate)</name>
        <dbReference type="ChEBI" id="CHEBI:58088"/>
    </ligand>
</feature>
<feature type="splice variant" id="VSP_056595" description="In isoform 2." evidence="7">
    <location>
        <begin position="121"/>
        <end position="193"/>
    </location>
</feature>
<feature type="sequence conflict" description="In Ref. 2; BAB14776." evidence="8" ref="2">
    <original>P</original>
    <variation>L</variation>
    <location>
        <position position="191"/>
    </location>
</feature>
<feature type="strand" evidence="9">
    <location>
        <begin position="2"/>
        <end position="11"/>
    </location>
</feature>
<feature type="strand" evidence="9">
    <location>
        <begin position="26"/>
        <end position="33"/>
    </location>
</feature>
<feature type="strand" evidence="9">
    <location>
        <begin position="36"/>
        <end position="43"/>
    </location>
</feature>
<feature type="helix" evidence="9">
    <location>
        <begin position="44"/>
        <end position="55"/>
    </location>
</feature>
<feature type="strand" evidence="9">
    <location>
        <begin position="71"/>
        <end position="74"/>
    </location>
</feature>
<feature type="helix" evidence="9">
    <location>
        <begin position="76"/>
        <end position="93"/>
    </location>
</feature>
<feature type="strand" evidence="9">
    <location>
        <begin position="94"/>
        <end position="97"/>
    </location>
</feature>
<feature type="helix" evidence="9">
    <location>
        <begin position="99"/>
        <end position="105"/>
    </location>
</feature>
<protein>
    <recommendedName>
        <fullName>Sorting nexin-22</fullName>
    </recommendedName>
</protein>
<name>SNX22_HUMAN</name>
<proteinExistence type="evidence at protein level"/>
<gene>
    <name type="primary">SNX22</name>
</gene>
<sequence length="193" mass="22068">MLEVHIPSVGPEAEGPRQSPEKSHMVFRVEVLCSGRRHTVPRRYSEFHALHKRIKKLYKVPDFPSKRLPNWRTRGLEQRRQGLEAYIQGILYLNQEVPKELLEFLRLRHFPTDPKASNWGTLREFLPGDSSSQQHQRPVLSFHVDPYVCNPSPESLPNVVVNGVLQGLYSFSISPDKAQPKAACHPAPLPPMP</sequence>